<evidence type="ECO:0000255" key="1">
    <source>
        <dbReference type="HAMAP-Rule" id="MF_01521"/>
    </source>
</evidence>
<evidence type="ECO:0000305" key="2"/>
<reference key="1">
    <citation type="journal article" date="2005" name="Proc. Natl. Acad. Sci. U.S.A.">
        <title>Comparison of the complete genome sequences of Pseudomonas syringae pv. syringae B728a and pv. tomato DC3000.</title>
        <authorList>
            <person name="Feil H."/>
            <person name="Feil W.S."/>
            <person name="Chain P."/>
            <person name="Larimer F."/>
            <person name="Dibartolo G."/>
            <person name="Copeland A."/>
            <person name="Lykidis A."/>
            <person name="Trong S."/>
            <person name="Nolan M."/>
            <person name="Goltsman E."/>
            <person name="Thiel J."/>
            <person name="Malfatti S."/>
            <person name="Loper J.E."/>
            <person name="Lapidus A."/>
            <person name="Detter J.C."/>
            <person name="Land M."/>
            <person name="Richardson P.M."/>
            <person name="Kyrpides N.C."/>
            <person name="Ivanova N."/>
            <person name="Lindow S.E."/>
        </authorList>
    </citation>
    <scope>NUCLEOTIDE SEQUENCE [LARGE SCALE GENOMIC DNA]</scope>
    <source>
        <strain>B728a</strain>
    </source>
</reference>
<organism>
    <name type="scientific">Pseudomonas syringae pv. syringae (strain B728a)</name>
    <dbReference type="NCBI Taxonomy" id="205918"/>
    <lineage>
        <taxon>Bacteria</taxon>
        <taxon>Pseudomonadati</taxon>
        <taxon>Pseudomonadota</taxon>
        <taxon>Gammaproteobacteria</taxon>
        <taxon>Pseudomonadales</taxon>
        <taxon>Pseudomonadaceae</taxon>
        <taxon>Pseudomonas</taxon>
        <taxon>Pseudomonas syringae</taxon>
    </lineage>
</organism>
<sequence>MNPISLLFLALAMSTDAFAAALGKGASLHKPRFLEALRTGLIFGAIETITPVIGWGIGQVAARFAESWDHWIAFTLLLVLGLHMIYNGIKHDDDEEQEKPGQHSFWILAVTAFATSIDALAVGVGLAFVDVNIVVAALAIGLATTVMVTIGVMLGRVLGTMVGKRAEIIGGIVLIVVGATILYEHLSAAQ</sequence>
<proteinExistence type="inferred from homology"/>
<comment type="function">
    <text evidence="1">Probably functions as a manganese efflux pump.</text>
</comment>
<comment type="subcellular location">
    <subcellularLocation>
        <location evidence="1">Cell inner membrane</location>
        <topology evidence="1">Multi-pass membrane protein</topology>
    </subcellularLocation>
</comment>
<comment type="similarity">
    <text evidence="1">Belongs to the MntP (TC 9.B.29) family.</text>
</comment>
<comment type="sequence caution" evidence="2">
    <conflict type="erroneous initiation">
        <sequence resource="EMBL-CDS" id="AAY36773"/>
    </conflict>
</comment>
<accession>Q4ZVP9</accession>
<dbReference type="EMBL" id="CP000075">
    <property type="protein sequence ID" value="AAY36773.1"/>
    <property type="status" value="ALT_INIT"/>
    <property type="molecule type" value="Genomic_DNA"/>
</dbReference>
<dbReference type="RefSeq" id="WP_003318883.1">
    <property type="nucleotide sequence ID" value="NC_007005.1"/>
</dbReference>
<dbReference type="RefSeq" id="YP_234811.1">
    <property type="nucleotide sequence ID" value="NC_007005.1"/>
</dbReference>
<dbReference type="KEGG" id="psb:Psyr_1725"/>
<dbReference type="PATRIC" id="fig|205918.7.peg.1763"/>
<dbReference type="eggNOG" id="COG1971">
    <property type="taxonomic scope" value="Bacteria"/>
</dbReference>
<dbReference type="HOGENOM" id="CLU_096410_0_0_6"/>
<dbReference type="OrthoDB" id="9811590at2"/>
<dbReference type="Proteomes" id="UP000000426">
    <property type="component" value="Chromosome"/>
</dbReference>
<dbReference type="GO" id="GO:0005886">
    <property type="term" value="C:plasma membrane"/>
    <property type="evidence" value="ECO:0007669"/>
    <property type="project" value="UniProtKB-SubCell"/>
</dbReference>
<dbReference type="GO" id="GO:0005384">
    <property type="term" value="F:manganese ion transmembrane transporter activity"/>
    <property type="evidence" value="ECO:0007669"/>
    <property type="project" value="UniProtKB-UniRule"/>
</dbReference>
<dbReference type="HAMAP" id="MF_01521">
    <property type="entry name" value="MntP_pump"/>
    <property type="match status" value="1"/>
</dbReference>
<dbReference type="InterPro" id="IPR003810">
    <property type="entry name" value="Mntp/YtaF"/>
</dbReference>
<dbReference type="InterPro" id="IPR022929">
    <property type="entry name" value="Put_MntP"/>
</dbReference>
<dbReference type="NCBIfam" id="NF008546">
    <property type="entry name" value="PRK11469.1"/>
    <property type="match status" value="1"/>
</dbReference>
<dbReference type="PANTHER" id="PTHR35529">
    <property type="entry name" value="MANGANESE EFFLUX PUMP MNTP-RELATED"/>
    <property type="match status" value="1"/>
</dbReference>
<dbReference type="PANTHER" id="PTHR35529:SF1">
    <property type="entry name" value="MANGANESE EFFLUX PUMP MNTP-RELATED"/>
    <property type="match status" value="1"/>
</dbReference>
<dbReference type="Pfam" id="PF02659">
    <property type="entry name" value="Mntp"/>
    <property type="match status" value="1"/>
</dbReference>
<keyword id="KW-0997">Cell inner membrane</keyword>
<keyword id="KW-1003">Cell membrane</keyword>
<keyword id="KW-0406">Ion transport</keyword>
<keyword id="KW-0464">Manganese</keyword>
<keyword id="KW-0472">Membrane</keyword>
<keyword id="KW-0812">Transmembrane</keyword>
<keyword id="KW-1133">Transmembrane helix</keyword>
<keyword id="KW-0813">Transport</keyword>
<name>MNTP_PSEU2</name>
<gene>
    <name evidence="1" type="primary">mntP</name>
    <name type="ordered locus">Psyr_1725</name>
</gene>
<feature type="chain" id="PRO_0000292539" description="Putative manganese efflux pump MntP">
    <location>
        <begin position="1"/>
        <end position="190"/>
    </location>
</feature>
<feature type="transmembrane region" description="Helical" evidence="1">
    <location>
        <begin position="3"/>
        <end position="23"/>
    </location>
</feature>
<feature type="transmembrane region" description="Helical" evidence="1">
    <location>
        <begin position="41"/>
        <end position="61"/>
    </location>
</feature>
<feature type="transmembrane region" description="Helical" evidence="1">
    <location>
        <begin position="69"/>
        <end position="89"/>
    </location>
</feature>
<feature type="transmembrane region" description="Helical" evidence="1">
    <location>
        <begin position="105"/>
        <end position="125"/>
    </location>
</feature>
<feature type="transmembrane region" description="Helical" evidence="1">
    <location>
        <begin position="133"/>
        <end position="153"/>
    </location>
</feature>
<feature type="transmembrane region" description="Helical" evidence="1">
    <location>
        <begin position="168"/>
        <end position="188"/>
    </location>
</feature>
<protein>
    <recommendedName>
        <fullName evidence="1">Putative manganese efflux pump MntP</fullName>
    </recommendedName>
</protein>